<sequence>MSAKMEPTFYEDALNASFAPPESGGYGYNNAKVLKQSMTLNLSDAASSLKPHLRNKNADILTSPDVGLLKLASPELERLIIQSSNGLITTTPTPTQFLCPKNVTDEQEGFAEGFVRALAELHNQNTLPSVTSAAQPVSGGMAPVSSMAGGGSFNTSLHSEPPVYANLSNFNPNALNSAPNYNANGMGYAPQHHINPQMPVQHPRLQALKEEPQTVPEMPGETPPLSPIDMESQERIKAERKRMRNRIAASKCRKRKLERIARLEEKVKTLKAQNSELASTANMLREQVAQLKQKVMNHVNSGCQLMLTQQLQTF</sequence>
<keyword id="KW-0010">Activator</keyword>
<keyword id="KW-0238">DNA-binding</keyword>
<keyword id="KW-0539">Nucleus</keyword>
<keyword id="KW-0656">Proto-oncogene</keyword>
<keyword id="KW-1185">Reference proteome</keyword>
<keyword id="KW-0804">Transcription</keyword>
<keyword id="KW-0805">Transcription regulation</keyword>
<protein>
    <recommendedName>
        <fullName evidence="4">Transcription factor Jun</fullName>
    </recommendedName>
    <alternativeName>
        <fullName>Proto-oncogene c-Jun</fullName>
    </alternativeName>
    <alternativeName>
        <fullName evidence="4">Transcription factor AP-1 subunit Jun</fullName>
    </alternativeName>
</protein>
<organism>
    <name type="scientific">Gallus gallus</name>
    <name type="common">Chicken</name>
    <dbReference type="NCBI Taxonomy" id="9031"/>
    <lineage>
        <taxon>Eukaryota</taxon>
        <taxon>Metazoa</taxon>
        <taxon>Chordata</taxon>
        <taxon>Craniata</taxon>
        <taxon>Vertebrata</taxon>
        <taxon>Euteleostomi</taxon>
        <taxon>Archelosauria</taxon>
        <taxon>Archosauria</taxon>
        <taxon>Dinosauria</taxon>
        <taxon>Saurischia</taxon>
        <taxon>Theropoda</taxon>
        <taxon>Coelurosauria</taxon>
        <taxon>Aves</taxon>
        <taxon>Neognathae</taxon>
        <taxon>Galloanserae</taxon>
        <taxon>Galliformes</taxon>
        <taxon>Phasianidae</taxon>
        <taxon>Phasianinae</taxon>
        <taxon>Gallus</taxon>
    </lineage>
</organism>
<accession>P18870</accession>
<reference key="1">
    <citation type="journal article" date="1988" name="Oncogene">
        <title>The avian cellular homolog of the oncogene jun.</title>
        <authorList>
            <person name="Nishimura T."/>
            <person name="Vogt P.K."/>
        </authorList>
    </citation>
    <scope>NUCLEOTIDE SEQUENCE [GENOMIC DNA]</scope>
    <source>
        <tissue>Fibroblast</tissue>
    </source>
</reference>
<reference key="2">
    <citation type="journal article" date="1995" name="J. Virol.">
        <title>Transactivation activity of Meq, a Marek's disease herpesvirus bZIP protein persistently expressed in latently infected transformed T cells.</title>
        <authorList>
            <person name="Qian Z."/>
            <person name="Brunovskis P."/>
            <person name="Rauscher F. III"/>
            <person name="Lee L."/>
            <person name="Kung H.J."/>
        </authorList>
    </citation>
    <scope>INTERACTION WITH GAHV-2 MEQ</scope>
</reference>
<proteinExistence type="evidence at protein level"/>
<dbReference type="EMBL" id="M57467">
    <property type="protein sequence ID" value="AAA48927.1"/>
    <property type="status" value="ALT_INIT"/>
    <property type="molecule type" value="Genomic_DNA"/>
</dbReference>
<dbReference type="PIR" id="I50373">
    <property type="entry name" value="I50373"/>
</dbReference>
<dbReference type="RefSeq" id="NP_001026460.1">
    <property type="nucleotide sequence ID" value="NM_001031289.1"/>
</dbReference>
<dbReference type="SMR" id="P18870"/>
<dbReference type="ELM" id="P18870"/>
<dbReference type="FunCoup" id="P18870">
    <property type="interactions" value="1407"/>
</dbReference>
<dbReference type="IntAct" id="P18870">
    <property type="interactions" value="3"/>
</dbReference>
<dbReference type="MINT" id="P18870"/>
<dbReference type="STRING" id="9031.ENSGALP00000037247"/>
<dbReference type="ChEMBL" id="CHEMBL1075084"/>
<dbReference type="PaxDb" id="9031-ENSGALP00000037247"/>
<dbReference type="GeneID" id="424673"/>
<dbReference type="KEGG" id="gga:424673"/>
<dbReference type="CTD" id="3725"/>
<dbReference type="VEuPathDB" id="HostDB:geneid_424673"/>
<dbReference type="eggNOG" id="KOG0837">
    <property type="taxonomic scope" value="Eukaryota"/>
</dbReference>
<dbReference type="InParanoid" id="P18870"/>
<dbReference type="OrthoDB" id="2187714at2759"/>
<dbReference type="PhylomeDB" id="P18870"/>
<dbReference type="Reactome" id="R-GGA-437986">
    <property type="pathway name" value="Activated TAK1 mediates Jun kinases (JNK) phosphorylation and activation"/>
</dbReference>
<dbReference type="PRO" id="PR:P18870"/>
<dbReference type="Proteomes" id="UP000000539">
    <property type="component" value="Unassembled WGS sequence"/>
</dbReference>
<dbReference type="GO" id="GO:0005634">
    <property type="term" value="C:nucleus"/>
    <property type="evidence" value="ECO:0000314"/>
    <property type="project" value="AgBase"/>
</dbReference>
<dbReference type="GO" id="GO:0005667">
    <property type="term" value="C:transcription regulator complex"/>
    <property type="evidence" value="ECO:0000318"/>
    <property type="project" value="GO_Central"/>
</dbReference>
<dbReference type="GO" id="GO:0000981">
    <property type="term" value="F:DNA-binding transcription factor activity, RNA polymerase II-specific"/>
    <property type="evidence" value="ECO:0000318"/>
    <property type="project" value="GO_Central"/>
</dbReference>
<dbReference type="GO" id="GO:0000978">
    <property type="term" value="F:RNA polymerase II cis-regulatory region sequence-specific DNA binding"/>
    <property type="evidence" value="ECO:0000318"/>
    <property type="project" value="GO_Central"/>
</dbReference>
<dbReference type="GO" id="GO:0000976">
    <property type="term" value="F:transcription cis-regulatory region binding"/>
    <property type="evidence" value="ECO:0000250"/>
    <property type="project" value="UniProtKB"/>
</dbReference>
<dbReference type="GO" id="GO:0043923">
    <property type="term" value="P:positive regulation by host of viral transcription"/>
    <property type="evidence" value="ECO:0000315"/>
    <property type="project" value="AgBase"/>
</dbReference>
<dbReference type="GO" id="GO:0045944">
    <property type="term" value="P:positive regulation of transcription by RNA polymerase II"/>
    <property type="evidence" value="ECO:0000250"/>
    <property type="project" value="UniProtKB"/>
</dbReference>
<dbReference type="GO" id="GO:0051726">
    <property type="term" value="P:regulation of cell cycle"/>
    <property type="evidence" value="ECO:0000318"/>
    <property type="project" value="GO_Central"/>
</dbReference>
<dbReference type="GO" id="GO:0042127">
    <property type="term" value="P:regulation of cell population proliferation"/>
    <property type="evidence" value="ECO:0000318"/>
    <property type="project" value="GO_Central"/>
</dbReference>
<dbReference type="GO" id="GO:0048545">
    <property type="term" value="P:response to steroid hormone"/>
    <property type="evidence" value="ECO:0000318"/>
    <property type="project" value="GO_Central"/>
</dbReference>
<dbReference type="CDD" id="cd14696">
    <property type="entry name" value="bZIP_Jun"/>
    <property type="match status" value="1"/>
</dbReference>
<dbReference type="FunFam" id="1.20.5.170:FF:000012">
    <property type="entry name" value="Putative transcription factor AP-1"/>
    <property type="match status" value="1"/>
</dbReference>
<dbReference type="Gene3D" id="1.20.5.170">
    <property type="match status" value="1"/>
</dbReference>
<dbReference type="InterPro" id="IPR050946">
    <property type="entry name" value="AP-1_TF_bZIP"/>
</dbReference>
<dbReference type="InterPro" id="IPR004827">
    <property type="entry name" value="bZIP"/>
</dbReference>
<dbReference type="InterPro" id="IPR046347">
    <property type="entry name" value="bZIP_sf"/>
</dbReference>
<dbReference type="InterPro" id="IPR005643">
    <property type="entry name" value="JNK"/>
</dbReference>
<dbReference type="InterPro" id="IPR002112">
    <property type="entry name" value="Leuzip_Jun"/>
</dbReference>
<dbReference type="InterPro" id="IPR008917">
    <property type="entry name" value="TF_DNA-bd_sf"/>
</dbReference>
<dbReference type="PANTHER" id="PTHR11462">
    <property type="entry name" value="JUN TRANSCRIPTION FACTOR-RELATED"/>
    <property type="match status" value="1"/>
</dbReference>
<dbReference type="PANTHER" id="PTHR11462:SF8">
    <property type="entry name" value="TRANSCRIPTION FACTOR JUN"/>
    <property type="match status" value="1"/>
</dbReference>
<dbReference type="Pfam" id="PF00170">
    <property type="entry name" value="bZIP_1"/>
    <property type="match status" value="1"/>
</dbReference>
<dbReference type="Pfam" id="PF03957">
    <property type="entry name" value="Jun"/>
    <property type="match status" value="1"/>
</dbReference>
<dbReference type="PRINTS" id="PR00043">
    <property type="entry name" value="LEUZIPPRJUN"/>
</dbReference>
<dbReference type="SMART" id="SM00338">
    <property type="entry name" value="BRLZ"/>
    <property type="match status" value="1"/>
</dbReference>
<dbReference type="SUPFAM" id="SSF47454">
    <property type="entry name" value="A DNA-binding domain in eukaryotic transcription factors"/>
    <property type="match status" value="1"/>
</dbReference>
<dbReference type="SUPFAM" id="SSF57959">
    <property type="entry name" value="Leucine zipper domain"/>
    <property type="match status" value="1"/>
</dbReference>
<dbReference type="PROSITE" id="PS50217">
    <property type="entry name" value="BZIP"/>
    <property type="match status" value="1"/>
</dbReference>
<dbReference type="PROSITE" id="PS00036">
    <property type="entry name" value="BZIP_BASIC"/>
    <property type="match status" value="1"/>
</dbReference>
<gene>
    <name type="primary">JUN</name>
</gene>
<comment type="function">
    <text evidence="1">Transcription factor that recognizes and binds to the enhancer heptamer motif 5'-TGA[CG]TCA-3'. May be involved in activated KRAS-mediated transcriptional activation of USP28. May bind to the USP28 promoter.</text>
</comment>
<comment type="subunit">
    <text evidence="3">Interacts with FOS to form a dimer. Interacts with Gallid herpesvirus 2 MEQ protein.</text>
</comment>
<comment type="interaction">
    <interactant intactId="EBI-445826">
        <id>P18870</id>
    </interactant>
    <interactant intactId="EBI-10889526">
        <id>Q9DGW5</id>
        <label>MDV005</label>
    </interactant>
    <organismsDiffer>true</organismsDiffer>
    <experiments>5</experiments>
</comment>
<comment type="interaction">
    <interactant intactId="EBI-445826">
        <id>P18870</id>
    </interactant>
    <interactant intactId="EBI-10766689">
        <id>Q77Q71</id>
        <label>R-LORF7</label>
    </interactant>
    <organismsDiffer>true</organismsDiffer>
    <experiments>2</experiments>
</comment>
<comment type="subcellular location">
    <subcellularLocation>
        <location>Nucleus</location>
    </subcellularLocation>
</comment>
<comment type="similarity">
    <text evidence="4">Belongs to the bZIP family. Jun subfamily.</text>
</comment>
<comment type="sequence caution" evidence="4">
    <conflict type="erroneous initiation">
        <sequence resource="EMBL-CDS" id="AAA48927"/>
    </conflict>
</comment>
<feature type="chain" id="PRO_0000076433" description="Transcription factor Jun">
    <location>
        <begin position="1"/>
        <end position="314"/>
    </location>
</feature>
<feature type="domain" description="bZIP" evidence="2">
    <location>
        <begin position="235"/>
        <end position="298"/>
    </location>
</feature>
<feature type="region of interest" description="Basic motif" evidence="2">
    <location>
        <begin position="235"/>
        <end position="262"/>
    </location>
</feature>
<feature type="region of interest" description="Leucine-zipper" evidence="2">
    <location>
        <begin position="263"/>
        <end position="291"/>
    </location>
</feature>
<name>JUN_CHICK</name>
<evidence type="ECO:0000250" key="1">
    <source>
        <dbReference type="UniProtKB" id="P05412"/>
    </source>
</evidence>
<evidence type="ECO:0000255" key="2">
    <source>
        <dbReference type="PROSITE-ProRule" id="PRU00978"/>
    </source>
</evidence>
<evidence type="ECO:0000269" key="3">
    <source>
    </source>
</evidence>
<evidence type="ECO:0000305" key="4"/>